<comment type="function">
    <text evidence="1">Catalyzes hydrolytic cleavage of carbon-halogen bonds in halogenated aliphatic compounds, leading to the formation of the corresponding primary alcohols, halide ions and protons.</text>
</comment>
<comment type="catalytic activity">
    <reaction>
        <text>1-haloalkane + H2O = a halide anion + a primary alcohol + H(+)</text>
        <dbReference type="Rhea" id="RHEA:19081"/>
        <dbReference type="ChEBI" id="CHEBI:15377"/>
        <dbReference type="ChEBI" id="CHEBI:15378"/>
        <dbReference type="ChEBI" id="CHEBI:15734"/>
        <dbReference type="ChEBI" id="CHEBI:16042"/>
        <dbReference type="ChEBI" id="CHEBI:18060"/>
        <dbReference type="EC" id="3.8.1.5"/>
    </reaction>
</comment>
<comment type="subunit">
    <text evidence="1">Monomer.</text>
</comment>
<comment type="miscellaneous">
    <text>Was identified as a high-confidence drug target.</text>
</comment>
<comment type="similarity">
    <text evidence="3">Belongs to the haloalkane dehalogenase family. Type 1 subfamily.</text>
</comment>
<accession>P9WMS3</accession>
<accession>L0TAS4</accession>
<accession>P64301</accession>
<accession>Q50670</accession>
<proteinExistence type="evidence at protein level"/>
<keyword id="KW-0378">Hydrolase</keyword>
<keyword id="KW-1185">Reference proteome</keyword>
<reference key="1">
    <citation type="journal article" date="1998" name="Nature">
        <title>Deciphering the biology of Mycobacterium tuberculosis from the complete genome sequence.</title>
        <authorList>
            <person name="Cole S.T."/>
            <person name="Brosch R."/>
            <person name="Parkhill J."/>
            <person name="Garnier T."/>
            <person name="Churcher C.M."/>
            <person name="Harris D.E."/>
            <person name="Gordon S.V."/>
            <person name="Eiglmeier K."/>
            <person name="Gas S."/>
            <person name="Barry C.E. III"/>
            <person name="Tekaia F."/>
            <person name="Badcock K."/>
            <person name="Basham D."/>
            <person name="Brown D."/>
            <person name="Chillingworth T."/>
            <person name="Connor R."/>
            <person name="Davies R.M."/>
            <person name="Devlin K."/>
            <person name="Feltwell T."/>
            <person name="Gentles S."/>
            <person name="Hamlin N."/>
            <person name="Holroyd S."/>
            <person name="Hornsby T."/>
            <person name="Jagels K."/>
            <person name="Krogh A."/>
            <person name="McLean J."/>
            <person name="Moule S."/>
            <person name="Murphy L.D."/>
            <person name="Oliver S."/>
            <person name="Osborne J."/>
            <person name="Quail M.A."/>
            <person name="Rajandream M.A."/>
            <person name="Rogers J."/>
            <person name="Rutter S."/>
            <person name="Seeger K."/>
            <person name="Skelton S."/>
            <person name="Squares S."/>
            <person name="Squares R."/>
            <person name="Sulston J.E."/>
            <person name="Taylor K."/>
            <person name="Whitehead S."/>
            <person name="Barrell B.G."/>
        </authorList>
    </citation>
    <scope>NUCLEOTIDE SEQUENCE [LARGE SCALE GENOMIC DNA]</scope>
    <source>
        <strain>ATCC 25618 / H37Rv</strain>
    </source>
</reference>
<reference key="2">
    <citation type="journal article" date="2008" name="BMC Syst. Biol.">
        <title>targetTB: a target identification pipeline for Mycobacterium tuberculosis through an interactome, reactome and genome-scale structural analysis.</title>
        <authorList>
            <person name="Raman K."/>
            <person name="Yeturu K."/>
            <person name="Chandra N."/>
        </authorList>
    </citation>
    <scope>IDENTIFICATION AS A DRUG TARGET [LARGE SCALE ANALYSIS]</scope>
</reference>
<reference key="3">
    <citation type="journal article" date="2011" name="Mol. Cell. Proteomics">
        <title>Proteogenomic analysis of Mycobacterium tuberculosis by high resolution mass spectrometry.</title>
        <authorList>
            <person name="Kelkar D.S."/>
            <person name="Kumar D."/>
            <person name="Kumar P."/>
            <person name="Balakrishnan L."/>
            <person name="Muthusamy B."/>
            <person name="Yadav A.K."/>
            <person name="Shrivastava P."/>
            <person name="Marimuthu A."/>
            <person name="Anand S."/>
            <person name="Sundaram H."/>
            <person name="Kingsbury R."/>
            <person name="Harsha H.C."/>
            <person name="Nair B."/>
            <person name="Prasad T.S."/>
            <person name="Chauhan D.S."/>
            <person name="Katoch K."/>
            <person name="Katoch V.M."/>
            <person name="Kumar P."/>
            <person name="Chaerkady R."/>
            <person name="Ramachandran S."/>
            <person name="Dash D."/>
            <person name="Pandey A."/>
        </authorList>
    </citation>
    <scope>IDENTIFICATION BY MASS SPECTROMETRY [LARGE SCALE ANALYSIS]</scope>
    <source>
        <strain>ATCC 25618 / H37Rv</strain>
    </source>
</reference>
<feature type="chain" id="PRO_0000216767" description="Haloalkane dehalogenase 1">
    <location>
        <begin position="1"/>
        <end position="300"/>
    </location>
</feature>
<feature type="domain" description="AB hydrolase-1" evidence="2">
    <location>
        <begin position="47"/>
        <end position="176"/>
    </location>
</feature>
<feature type="active site" description="Nucleophile" evidence="1">
    <location>
        <position position="123"/>
    </location>
</feature>
<feature type="active site" description="Proton donor" evidence="1">
    <location>
        <position position="250"/>
    </location>
</feature>
<feature type="active site" description="Proton acceptor" evidence="1">
    <location>
        <position position="279"/>
    </location>
</feature>
<dbReference type="EC" id="3.8.1.5"/>
<dbReference type="EMBL" id="AL123456">
    <property type="protein sequence ID" value="CCP45078.1"/>
    <property type="molecule type" value="Genomic_DNA"/>
</dbReference>
<dbReference type="PIR" id="D70733">
    <property type="entry name" value="D70733"/>
</dbReference>
<dbReference type="RefSeq" id="NP_216812.1">
    <property type="nucleotide sequence ID" value="NC_000962.3"/>
</dbReference>
<dbReference type="RefSeq" id="WP_003411849.1">
    <property type="nucleotide sequence ID" value="NZ_NVQJ01000012.1"/>
</dbReference>
<dbReference type="SMR" id="P9WMS3"/>
<dbReference type="STRING" id="83332.Rv2296"/>
<dbReference type="ESTHER" id="myctu-RV2296">
    <property type="family name" value="Haloalkane_dehalogenase-HLD1"/>
</dbReference>
<dbReference type="PaxDb" id="83332-Rv2296"/>
<dbReference type="DNASU" id="887796"/>
<dbReference type="GeneID" id="887796"/>
<dbReference type="KEGG" id="mtu:Rv2296"/>
<dbReference type="KEGG" id="mtv:RVBD_2296"/>
<dbReference type="TubercuList" id="Rv2296"/>
<dbReference type="eggNOG" id="COG0596">
    <property type="taxonomic scope" value="Bacteria"/>
</dbReference>
<dbReference type="InParanoid" id="P9WMS3"/>
<dbReference type="OrthoDB" id="5431692at2"/>
<dbReference type="PhylomeDB" id="P9WMS3"/>
<dbReference type="Proteomes" id="UP000001584">
    <property type="component" value="Chromosome"/>
</dbReference>
<dbReference type="GO" id="GO:0009274">
    <property type="term" value="C:peptidoglycan-based cell wall"/>
    <property type="evidence" value="ECO:0007005"/>
    <property type="project" value="MTBBASE"/>
</dbReference>
<dbReference type="GO" id="GO:0005886">
    <property type="term" value="C:plasma membrane"/>
    <property type="evidence" value="ECO:0007005"/>
    <property type="project" value="MTBBASE"/>
</dbReference>
<dbReference type="GO" id="GO:0018786">
    <property type="term" value="F:haloalkane dehalogenase activity"/>
    <property type="evidence" value="ECO:0007669"/>
    <property type="project" value="UniProtKB-UniRule"/>
</dbReference>
<dbReference type="GO" id="GO:0016787">
    <property type="term" value="F:hydrolase activity"/>
    <property type="evidence" value="ECO:0000318"/>
    <property type="project" value="GO_Central"/>
</dbReference>
<dbReference type="FunFam" id="3.40.50.1820:FF:000325">
    <property type="entry name" value="Haloalkane dehalogenase"/>
    <property type="match status" value="1"/>
</dbReference>
<dbReference type="Gene3D" id="3.40.50.1820">
    <property type="entry name" value="alpha/beta hydrolase"/>
    <property type="match status" value="1"/>
</dbReference>
<dbReference type="HAMAP" id="MF_01230">
    <property type="entry name" value="Haloalk_dehal_type1"/>
    <property type="match status" value="1"/>
</dbReference>
<dbReference type="InterPro" id="IPR000073">
    <property type="entry name" value="AB_hydrolase_1"/>
</dbReference>
<dbReference type="InterPro" id="IPR029058">
    <property type="entry name" value="AB_hydrolase_fold"/>
</dbReference>
<dbReference type="InterPro" id="IPR000639">
    <property type="entry name" value="Epox_hydrolase-like"/>
</dbReference>
<dbReference type="InterPro" id="IPR051340">
    <property type="entry name" value="Haloalkane_dehalogenase"/>
</dbReference>
<dbReference type="InterPro" id="IPR023489">
    <property type="entry name" value="Haloalkane_dehalogenase_1"/>
</dbReference>
<dbReference type="NCBIfam" id="NF002043">
    <property type="entry name" value="PRK00870.1"/>
    <property type="match status" value="1"/>
</dbReference>
<dbReference type="PANTHER" id="PTHR42977:SF3">
    <property type="entry name" value="AB HYDROLASE-1 DOMAIN-CONTAINING PROTEIN"/>
    <property type="match status" value="1"/>
</dbReference>
<dbReference type="PANTHER" id="PTHR42977">
    <property type="entry name" value="HYDROLASE-RELATED"/>
    <property type="match status" value="1"/>
</dbReference>
<dbReference type="Pfam" id="PF00561">
    <property type="entry name" value="Abhydrolase_1"/>
    <property type="match status" value="1"/>
</dbReference>
<dbReference type="PRINTS" id="PR00111">
    <property type="entry name" value="ABHYDROLASE"/>
</dbReference>
<dbReference type="PRINTS" id="PR00412">
    <property type="entry name" value="EPOXHYDRLASE"/>
</dbReference>
<dbReference type="SUPFAM" id="SSF53474">
    <property type="entry name" value="alpha/beta-Hydrolases"/>
    <property type="match status" value="1"/>
</dbReference>
<sequence length="300" mass="33358">MDVLRTPDSRFEHLVGYPFAPHYVDVTAGDTQPLRMHYVDEGPGDGPPIVLLHGEPTWSYLYRTMIPPLSAAGHRVLAPDLIGFGRSDKPTRIEDYTYLRHVEWVTSWFENLDLHDVTLFVQDWGSLIGLRIAAEHGDRIARLVVANGFLPAAQGRTPLPFYVWRAFARYSPVLPAGRLVNFGTVHRVPAGVRAGYDAPFPDKTYQAGARAFPRLVPTSPDDPAVPANRAAWEALGRWDKPFLAIFGYRDPILGQADGPLIKHIPGAAGQPHARIKASHFIQEDSGTELAERMLSWQQAT</sequence>
<protein>
    <recommendedName>
        <fullName>Haloalkane dehalogenase 1</fullName>
        <ecNumber>3.8.1.5</ecNumber>
    </recommendedName>
</protein>
<gene>
    <name type="primary">dhmA1</name>
    <name type="ordered locus">Rv2296</name>
    <name type="ORF">MTCY339.14c</name>
</gene>
<name>DHMA1_MYCTU</name>
<organism>
    <name type="scientific">Mycobacterium tuberculosis (strain ATCC 25618 / H37Rv)</name>
    <dbReference type="NCBI Taxonomy" id="83332"/>
    <lineage>
        <taxon>Bacteria</taxon>
        <taxon>Bacillati</taxon>
        <taxon>Actinomycetota</taxon>
        <taxon>Actinomycetes</taxon>
        <taxon>Mycobacteriales</taxon>
        <taxon>Mycobacteriaceae</taxon>
        <taxon>Mycobacterium</taxon>
        <taxon>Mycobacterium tuberculosis complex</taxon>
    </lineage>
</organism>
<evidence type="ECO:0000250" key="1"/>
<evidence type="ECO:0000255" key="2"/>
<evidence type="ECO:0000305" key="3"/>